<feature type="chain" id="PRO_0000436308" description="Palmitoyltransferase Hip14" evidence="10">
    <location>
        <begin position="1"/>
        <end position="637"/>
    </location>
</feature>
<feature type="topological domain" description="Cytoplasmic" evidence="10">
    <location>
        <begin position="1"/>
        <end position="295"/>
    </location>
</feature>
<feature type="transmembrane region" description="Helical" evidence="2">
    <location>
        <begin position="296"/>
        <end position="315"/>
    </location>
</feature>
<feature type="topological domain" description="Lumenal" evidence="10">
    <location>
        <begin position="316"/>
        <end position="318"/>
    </location>
</feature>
<feature type="transmembrane region" description="Helical" evidence="2">
    <location>
        <begin position="319"/>
        <end position="341"/>
    </location>
</feature>
<feature type="topological domain" description="Cytoplasmic" evidence="10">
    <location>
        <begin position="342"/>
        <end position="345"/>
    </location>
</feature>
<feature type="transmembrane region" description="Helical" evidence="2">
    <location>
        <begin position="346"/>
        <end position="366"/>
    </location>
</feature>
<feature type="topological domain" description="Lumenal" evidence="10">
    <location>
        <begin position="367"/>
        <end position="373"/>
    </location>
</feature>
<feature type="transmembrane region" description="Helical" evidence="2">
    <location>
        <begin position="374"/>
        <end position="394"/>
    </location>
</feature>
<feature type="topological domain" description="Cytoplasmic" evidence="10">
    <location>
        <begin position="395"/>
        <end position="472"/>
    </location>
</feature>
<feature type="transmembrane region" description="Helical" evidence="2">
    <location>
        <begin position="473"/>
        <end position="493"/>
    </location>
</feature>
<feature type="topological domain" description="Lumenal" evidence="10">
    <location>
        <begin position="494"/>
        <end position="520"/>
    </location>
</feature>
<feature type="transmembrane region" description="Helical" evidence="2">
    <location>
        <begin position="521"/>
        <end position="541"/>
    </location>
</feature>
<feature type="topological domain" description="Cytoplasmic" evidence="10">
    <location>
        <begin position="542"/>
        <end position="637"/>
    </location>
</feature>
<feature type="repeat" description="ANK 1" evidence="2">
    <location>
        <begin position="77"/>
        <end position="106"/>
    </location>
</feature>
<feature type="repeat" description="ANK 2" evidence="2">
    <location>
        <begin position="111"/>
        <end position="140"/>
    </location>
</feature>
<feature type="repeat" description="ANK 3" evidence="2">
    <location>
        <begin position="144"/>
        <end position="173"/>
    </location>
</feature>
<feature type="repeat" description="ANK 4" evidence="2">
    <location>
        <begin position="177"/>
        <end position="207"/>
    </location>
</feature>
<feature type="repeat" description="ANK 5" evidence="2">
    <location>
        <begin position="212"/>
        <end position="242"/>
    </location>
</feature>
<feature type="domain" description="DHHC" evidence="3">
    <location>
        <begin position="430"/>
        <end position="480"/>
    </location>
</feature>
<feature type="active site" description="S-palmitoyl cysteine intermediate" evidence="1">
    <location>
        <position position="460"/>
    </location>
</feature>
<gene>
    <name evidence="12" type="primary">Hip14</name>
    <name evidence="12" type="ORF">CG6017</name>
</gene>
<reference evidence="13" key="1">
    <citation type="journal article" date="2000" name="Science">
        <title>The genome sequence of Drosophila melanogaster.</title>
        <authorList>
            <person name="Adams M.D."/>
            <person name="Celniker S.E."/>
            <person name="Holt R.A."/>
            <person name="Evans C.A."/>
            <person name="Gocayne J.D."/>
            <person name="Amanatides P.G."/>
            <person name="Scherer S.E."/>
            <person name="Li P.W."/>
            <person name="Hoskins R.A."/>
            <person name="Galle R.F."/>
            <person name="George R.A."/>
            <person name="Lewis S.E."/>
            <person name="Richards S."/>
            <person name="Ashburner M."/>
            <person name="Henderson S.N."/>
            <person name="Sutton G.G."/>
            <person name="Wortman J.R."/>
            <person name="Yandell M.D."/>
            <person name="Zhang Q."/>
            <person name="Chen L.X."/>
            <person name="Brandon R.C."/>
            <person name="Rogers Y.-H.C."/>
            <person name="Blazej R.G."/>
            <person name="Champe M."/>
            <person name="Pfeiffer B.D."/>
            <person name="Wan K.H."/>
            <person name="Doyle C."/>
            <person name="Baxter E.G."/>
            <person name="Helt G."/>
            <person name="Nelson C.R."/>
            <person name="Miklos G.L.G."/>
            <person name="Abril J.F."/>
            <person name="Agbayani A."/>
            <person name="An H.-J."/>
            <person name="Andrews-Pfannkoch C."/>
            <person name="Baldwin D."/>
            <person name="Ballew R.M."/>
            <person name="Basu A."/>
            <person name="Baxendale J."/>
            <person name="Bayraktaroglu L."/>
            <person name="Beasley E.M."/>
            <person name="Beeson K.Y."/>
            <person name="Benos P.V."/>
            <person name="Berman B.P."/>
            <person name="Bhandari D."/>
            <person name="Bolshakov S."/>
            <person name="Borkova D."/>
            <person name="Botchan M.R."/>
            <person name="Bouck J."/>
            <person name="Brokstein P."/>
            <person name="Brottier P."/>
            <person name="Burtis K.C."/>
            <person name="Busam D.A."/>
            <person name="Butler H."/>
            <person name="Cadieu E."/>
            <person name="Center A."/>
            <person name="Chandra I."/>
            <person name="Cherry J.M."/>
            <person name="Cawley S."/>
            <person name="Dahlke C."/>
            <person name="Davenport L.B."/>
            <person name="Davies P."/>
            <person name="de Pablos B."/>
            <person name="Delcher A."/>
            <person name="Deng Z."/>
            <person name="Mays A.D."/>
            <person name="Dew I."/>
            <person name="Dietz S.M."/>
            <person name="Dodson K."/>
            <person name="Doup L.E."/>
            <person name="Downes M."/>
            <person name="Dugan-Rocha S."/>
            <person name="Dunkov B.C."/>
            <person name="Dunn P."/>
            <person name="Durbin K.J."/>
            <person name="Evangelista C.C."/>
            <person name="Ferraz C."/>
            <person name="Ferriera S."/>
            <person name="Fleischmann W."/>
            <person name="Fosler C."/>
            <person name="Gabrielian A.E."/>
            <person name="Garg N.S."/>
            <person name="Gelbart W.M."/>
            <person name="Glasser K."/>
            <person name="Glodek A."/>
            <person name="Gong F."/>
            <person name="Gorrell J.H."/>
            <person name="Gu Z."/>
            <person name="Guan P."/>
            <person name="Harris M."/>
            <person name="Harris N.L."/>
            <person name="Harvey D.A."/>
            <person name="Heiman T.J."/>
            <person name="Hernandez J.R."/>
            <person name="Houck J."/>
            <person name="Hostin D."/>
            <person name="Houston K.A."/>
            <person name="Howland T.J."/>
            <person name="Wei M.-H."/>
            <person name="Ibegwam C."/>
            <person name="Jalali M."/>
            <person name="Kalush F."/>
            <person name="Karpen G.H."/>
            <person name="Ke Z."/>
            <person name="Kennison J.A."/>
            <person name="Ketchum K.A."/>
            <person name="Kimmel B.E."/>
            <person name="Kodira C.D."/>
            <person name="Kraft C.L."/>
            <person name="Kravitz S."/>
            <person name="Kulp D."/>
            <person name="Lai Z."/>
            <person name="Lasko P."/>
            <person name="Lei Y."/>
            <person name="Levitsky A.A."/>
            <person name="Li J.H."/>
            <person name="Li Z."/>
            <person name="Liang Y."/>
            <person name="Lin X."/>
            <person name="Liu X."/>
            <person name="Mattei B."/>
            <person name="McIntosh T.C."/>
            <person name="McLeod M.P."/>
            <person name="McPherson D."/>
            <person name="Merkulov G."/>
            <person name="Milshina N.V."/>
            <person name="Mobarry C."/>
            <person name="Morris J."/>
            <person name="Moshrefi A."/>
            <person name="Mount S.M."/>
            <person name="Moy M."/>
            <person name="Murphy B."/>
            <person name="Murphy L."/>
            <person name="Muzny D.M."/>
            <person name="Nelson D.L."/>
            <person name="Nelson D.R."/>
            <person name="Nelson K.A."/>
            <person name="Nixon K."/>
            <person name="Nusskern D.R."/>
            <person name="Pacleb J.M."/>
            <person name="Palazzolo M."/>
            <person name="Pittman G.S."/>
            <person name="Pan S."/>
            <person name="Pollard J."/>
            <person name="Puri V."/>
            <person name="Reese M.G."/>
            <person name="Reinert K."/>
            <person name="Remington K."/>
            <person name="Saunders R.D.C."/>
            <person name="Scheeler F."/>
            <person name="Shen H."/>
            <person name="Shue B.C."/>
            <person name="Siden-Kiamos I."/>
            <person name="Simpson M."/>
            <person name="Skupski M.P."/>
            <person name="Smith T.J."/>
            <person name="Spier E."/>
            <person name="Spradling A.C."/>
            <person name="Stapleton M."/>
            <person name="Strong R."/>
            <person name="Sun E."/>
            <person name="Svirskas R."/>
            <person name="Tector C."/>
            <person name="Turner R."/>
            <person name="Venter E."/>
            <person name="Wang A.H."/>
            <person name="Wang X."/>
            <person name="Wang Z.-Y."/>
            <person name="Wassarman D.A."/>
            <person name="Weinstock G.M."/>
            <person name="Weissenbach J."/>
            <person name="Williams S.M."/>
            <person name="Woodage T."/>
            <person name="Worley K.C."/>
            <person name="Wu D."/>
            <person name="Yang S."/>
            <person name="Yao Q.A."/>
            <person name="Ye J."/>
            <person name="Yeh R.-F."/>
            <person name="Zaveri J.S."/>
            <person name="Zhan M."/>
            <person name="Zhang G."/>
            <person name="Zhao Q."/>
            <person name="Zheng L."/>
            <person name="Zheng X.H."/>
            <person name="Zhong F.N."/>
            <person name="Zhong W."/>
            <person name="Zhou X."/>
            <person name="Zhu S.C."/>
            <person name="Zhu X."/>
            <person name="Smith H.O."/>
            <person name="Gibbs R.A."/>
            <person name="Myers E.W."/>
            <person name="Rubin G.M."/>
            <person name="Venter J.C."/>
        </authorList>
    </citation>
    <scope>NUCLEOTIDE SEQUENCE [LARGE SCALE GENOMIC DNA]</scope>
    <source>
        <strain evidence="13">Berkeley</strain>
    </source>
</reference>
<reference evidence="13" key="2">
    <citation type="journal article" date="2002" name="Genome Biol.">
        <title>Annotation of the Drosophila melanogaster euchromatic genome: a systematic review.</title>
        <authorList>
            <person name="Misra S."/>
            <person name="Crosby M.A."/>
            <person name="Mungall C.J."/>
            <person name="Matthews B.B."/>
            <person name="Campbell K.S."/>
            <person name="Hradecky P."/>
            <person name="Huang Y."/>
            <person name="Kaminker J.S."/>
            <person name="Millburn G.H."/>
            <person name="Prochnik S.E."/>
            <person name="Smith C.D."/>
            <person name="Tupy J.L."/>
            <person name="Whitfield E.J."/>
            <person name="Bayraktaroglu L."/>
            <person name="Berman B.P."/>
            <person name="Bettencourt B.R."/>
            <person name="Celniker S.E."/>
            <person name="de Grey A.D.N.J."/>
            <person name="Drysdale R.A."/>
            <person name="Harris N.L."/>
            <person name="Richter J."/>
            <person name="Russo S."/>
            <person name="Schroeder A.J."/>
            <person name="Shu S.Q."/>
            <person name="Stapleton M."/>
            <person name="Yamada C."/>
            <person name="Ashburner M."/>
            <person name="Gelbart W.M."/>
            <person name="Rubin G.M."/>
            <person name="Lewis S.E."/>
        </authorList>
    </citation>
    <scope>GENOME REANNOTATION</scope>
    <source>
        <strain evidence="13">Berkeley</strain>
    </source>
</reference>
<reference evidence="11" key="3">
    <citation type="journal article" date="2002" name="Genome Biol.">
        <title>A Drosophila full-length cDNA resource.</title>
        <authorList>
            <person name="Stapleton M."/>
            <person name="Carlson J.W."/>
            <person name="Brokstein P."/>
            <person name="Yu C."/>
            <person name="Champe M."/>
            <person name="George R.A."/>
            <person name="Guarin H."/>
            <person name="Kronmiller B."/>
            <person name="Pacleb J.M."/>
            <person name="Park S."/>
            <person name="Wan K.H."/>
            <person name="Rubin G.M."/>
            <person name="Celniker S.E."/>
        </authorList>
    </citation>
    <scope>NUCLEOTIDE SEQUENCE [LARGE SCALE MRNA]</scope>
    <source>
        <strain evidence="11">Berkeley</strain>
        <tissue evidence="11">Embryo</tissue>
    </source>
</reference>
<reference evidence="10" key="4">
    <citation type="journal article" date="2007" name="J. Cell Biol.">
        <title>Huntingtin-interacting protein 14, a palmitoyl transferase required for exocytosis and targeting of CSP to synaptic vesicles.</title>
        <authorList>
            <person name="Ohyama T."/>
            <person name="Verstreken P."/>
            <person name="Ly C.V."/>
            <person name="Rosenmund T."/>
            <person name="Rajan A."/>
            <person name="Tien A.C."/>
            <person name="Haueter C."/>
            <person name="Schulze K.L."/>
            <person name="Bellen H.J."/>
        </authorList>
    </citation>
    <scope>FUNCTION</scope>
    <scope>SUBCELLULAR LOCATION</scope>
    <scope>TISSUE SPECIFICITY</scope>
</reference>
<reference evidence="10" key="5">
    <citation type="journal article" date="2007" name="J. Neurosci.">
        <title>Drosophila huntingtin-interacting protein 14 is a presynaptic protein required for photoreceptor synaptic transmission and expression of the palmitoylated proteins synaptosome-associated protein 25 and cysteine string protein.</title>
        <authorList>
            <person name="Stowers R.S."/>
            <person name="Isacoff E.Y."/>
        </authorList>
    </citation>
    <scope>FUNCTION</scope>
    <scope>SUBCELLULAR LOCATION</scope>
</reference>
<reference key="6">
    <citation type="journal article" date="2008" name="Fly">
        <title>The Drosophila protein palmitoylome: characterizing palmitoyl-thioesterases and DHHC palmitoyl-transferases.</title>
        <authorList>
            <person name="Bannan B.A."/>
            <person name="Van Etten J."/>
            <person name="Kohler J.A."/>
            <person name="Tsoi Y."/>
            <person name="Hansen N.M."/>
            <person name="Sigmon S."/>
            <person name="Fowler E."/>
            <person name="Buff H."/>
            <person name="Williams T.S."/>
            <person name="Ault J.G."/>
            <person name="Glaser R.L."/>
            <person name="Korey C.A."/>
        </authorList>
    </citation>
    <scope>SUBCELLULAR LOCATION</scope>
</reference>
<reference key="7">
    <citation type="journal article" date="2010" name="Dev. Biol.">
        <title>dHIP14-dependent palmitoylation promotes secretion of the BMP antagonist Sog.</title>
        <authorList>
            <person name="Kang K.H."/>
            <person name="Bier E."/>
        </authorList>
    </citation>
    <scope>FUNCTION</scope>
    <scope>INTERACTION WITH SOG</scope>
    <scope>SUBCELLULAR LOCATION</scope>
    <scope>DISRUPTION PHENOTYPE</scope>
</reference>
<name>HIP14_DROME</name>
<sequence>MYQSACQAATTGSCVPGTGQQPDNERQSALIAQQPPTAPVEPDYSGFDIVKATQYGAIARVRELVESGWDVNQPDSETVTLLHWAAINNRRDIIRYFLEKGATVDAVGGELNATPLHWATRQGHLGAVVLLMAAGADPRIRDAEGCSCIHIAAQFAHTALVAYFIAKGVDPDLQDRGGMTALMWAAWKVCALDPVRLLLTLGANPAMVDYTHGNTALHWAILARNATAISTLVLKSKASLDVPNLRGETPLSMLESQTGAIWIGAKVMDRVKEAALTSQQRRSLLSKLRHDKRLRWWSMVACPFTAFYLAGIVFTVNTLYIIKFFLLGCLYSIFHTIGKALFDEHLMALLPLSVYLATKAWFYVTWLMYIDDAVSFTATVCFLISSLLLWVCFLKSWKGDPGIIRPTREQRFKTIIELSERGGIGFEPASFCSGCLVRRPIRSKHCSVCDRCVARFDHHCPWVGNCIGLKNHSYFMGFLWMLLIMCAWMLYGGSKYYVNQCNVRFDDFLGAMRAIGNCDAWVGWVMGNALLHMSWVILLTICQTYQVICLGMTTNERMNRGRYRHFQAKGGHSPFTRGPIQNLVDFLECSCFGLVQPKRVDWMNYYDYDAQTHQTIEKEPLLSVDCPDGMAGDHQYV</sequence>
<protein>
    <recommendedName>
        <fullName evidence="9">Palmitoyltransferase Hip14</fullName>
        <ecNumber evidence="4">2.3.1.225</ecNumber>
    </recommendedName>
    <alternativeName>
        <fullName evidence="10">Huntingtin-interacting protein 14 homolog</fullName>
    </alternativeName>
</protein>
<accession>Q9VUW9</accession>
<proteinExistence type="evidence at protein level"/>
<evidence type="ECO:0000250" key="1">
    <source>
        <dbReference type="UniProtKB" id="Q8IUH5"/>
    </source>
</evidence>
<evidence type="ECO:0000255" key="2"/>
<evidence type="ECO:0000255" key="3">
    <source>
        <dbReference type="PROSITE-ProRule" id="PRU00067"/>
    </source>
</evidence>
<evidence type="ECO:0000255" key="4">
    <source>
        <dbReference type="RuleBase" id="RU079119"/>
    </source>
</evidence>
<evidence type="ECO:0000269" key="5">
    <source>
    </source>
</evidence>
<evidence type="ECO:0000269" key="6">
    <source>
    </source>
</evidence>
<evidence type="ECO:0000269" key="7">
    <source>
    </source>
</evidence>
<evidence type="ECO:0000269" key="8">
    <source>
    </source>
</evidence>
<evidence type="ECO:0000303" key="9">
    <source>
    </source>
</evidence>
<evidence type="ECO:0000305" key="10"/>
<evidence type="ECO:0000312" key="11">
    <source>
        <dbReference type="EMBL" id="AAM11132.1"/>
    </source>
</evidence>
<evidence type="ECO:0000312" key="12">
    <source>
        <dbReference type="FlyBase" id="FBgn0259824"/>
    </source>
</evidence>
<evidence type="ECO:0000312" key="13">
    <source>
        <dbReference type="Proteomes" id="UP000000803"/>
    </source>
</evidence>
<keyword id="KW-0012">Acyltransferase</keyword>
<keyword id="KW-0040">ANK repeat</keyword>
<keyword id="KW-1003">Cell membrane</keyword>
<keyword id="KW-0966">Cell projection</keyword>
<keyword id="KW-0333">Golgi apparatus</keyword>
<keyword id="KW-0449">Lipoprotein</keyword>
<keyword id="KW-0472">Membrane</keyword>
<keyword id="KW-0564">Palmitate</keyword>
<keyword id="KW-1185">Reference proteome</keyword>
<keyword id="KW-0677">Repeat</keyword>
<keyword id="KW-0770">Synapse</keyword>
<keyword id="KW-0808">Transferase</keyword>
<keyword id="KW-0812">Transmembrane</keyword>
<keyword id="KW-1133">Transmembrane helix</keyword>
<dbReference type="EC" id="2.3.1.225" evidence="4"/>
<dbReference type="EMBL" id="AE014296">
    <property type="protein sequence ID" value="AAF49554.1"/>
    <property type="molecule type" value="Genomic_DNA"/>
</dbReference>
<dbReference type="EMBL" id="AE014296">
    <property type="protein sequence ID" value="AGB94604.1"/>
    <property type="molecule type" value="Genomic_DNA"/>
</dbReference>
<dbReference type="EMBL" id="AY094779">
    <property type="protein sequence ID" value="AAM11132.1"/>
    <property type="molecule type" value="mRNA"/>
</dbReference>
<dbReference type="RefSeq" id="NP_001261911.1">
    <property type="nucleotide sequence ID" value="NM_001274982.1"/>
</dbReference>
<dbReference type="RefSeq" id="NP_648824.1">
    <property type="nucleotide sequence ID" value="NM_140567.3"/>
</dbReference>
<dbReference type="SMR" id="Q9VUW9"/>
<dbReference type="FunCoup" id="Q9VUW9">
    <property type="interactions" value="1382"/>
</dbReference>
<dbReference type="IntAct" id="Q9VUW9">
    <property type="interactions" value="3"/>
</dbReference>
<dbReference type="STRING" id="7227.FBpp0303194"/>
<dbReference type="TCDB" id="8.A.114.1.2">
    <property type="family name" value="the huntington-interacting protein 14 (hip14) family"/>
</dbReference>
<dbReference type="SwissPalm" id="Q9VUW9"/>
<dbReference type="PaxDb" id="7227-FBpp0305754"/>
<dbReference type="DNASU" id="39747"/>
<dbReference type="EnsemblMetazoa" id="FBtr0075518">
    <property type="protein sequence ID" value="FBpp0075273"/>
    <property type="gene ID" value="FBgn0259824"/>
</dbReference>
<dbReference type="EnsemblMetazoa" id="FBtr0333577">
    <property type="protein sequence ID" value="FBpp0305754"/>
    <property type="gene ID" value="FBgn0259824"/>
</dbReference>
<dbReference type="GeneID" id="39747"/>
<dbReference type="KEGG" id="dme:Dmel_CG6017"/>
<dbReference type="UCSC" id="CG6017-RA">
    <property type="organism name" value="d. melanogaster"/>
</dbReference>
<dbReference type="AGR" id="FB:FBgn0259824"/>
<dbReference type="CTD" id="39747"/>
<dbReference type="FlyBase" id="FBgn0259824">
    <property type="gene designation" value="Hip14"/>
</dbReference>
<dbReference type="VEuPathDB" id="VectorBase:FBgn0259824"/>
<dbReference type="eggNOG" id="KOG0509">
    <property type="taxonomic scope" value="Eukaryota"/>
</dbReference>
<dbReference type="GeneTree" id="ENSGT00530000063074"/>
<dbReference type="HOGENOM" id="CLU_012510_3_1_1"/>
<dbReference type="InParanoid" id="Q9VUW9"/>
<dbReference type="OMA" id="FWVGFRY"/>
<dbReference type="OrthoDB" id="6781668at2759"/>
<dbReference type="PhylomeDB" id="Q9VUW9"/>
<dbReference type="SignaLink" id="Q9VUW9"/>
<dbReference type="BioGRID-ORCS" id="39747">
    <property type="hits" value="0 hits in 3 CRISPR screens"/>
</dbReference>
<dbReference type="GenomeRNAi" id="39747"/>
<dbReference type="PRO" id="PR:Q9VUW9"/>
<dbReference type="Proteomes" id="UP000000803">
    <property type="component" value="Chromosome 3L"/>
</dbReference>
<dbReference type="Bgee" id="FBgn0259824">
    <property type="expression patterns" value="Expressed in mechanosensory neuron (Drosophila) in imaginal disc-derived wing and 136 other cell types or tissues"/>
</dbReference>
<dbReference type="ExpressionAtlas" id="Q9VUW9">
    <property type="expression patterns" value="baseline and differential"/>
</dbReference>
<dbReference type="GO" id="GO:0042995">
    <property type="term" value="C:cell projection"/>
    <property type="evidence" value="ECO:0007669"/>
    <property type="project" value="UniProtKB-KW"/>
</dbReference>
<dbReference type="GO" id="GO:0005794">
    <property type="term" value="C:Golgi apparatus"/>
    <property type="evidence" value="ECO:0000314"/>
    <property type="project" value="FlyBase"/>
</dbReference>
<dbReference type="GO" id="GO:0000139">
    <property type="term" value="C:Golgi membrane"/>
    <property type="evidence" value="ECO:0007669"/>
    <property type="project" value="UniProtKB-SubCell"/>
</dbReference>
<dbReference type="GO" id="GO:0042734">
    <property type="term" value="C:presynaptic membrane"/>
    <property type="evidence" value="ECO:0007669"/>
    <property type="project" value="UniProtKB-SubCell"/>
</dbReference>
<dbReference type="GO" id="GO:0045202">
    <property type="term" value="C:synapse"/>
    <property type="evidence" value="ECO:0000314"/>
    <property type="project" value="FlyBase"/>
</dbReference>
<dbReference type="GO" id="GO:0008021">
    <property type="term" value="C:synaptic vesicle"/>
    <property type="evidence" value="ECO:0000314"/>
    <property type="project" value="FlyBase"/>
</dbReference>
<dbReference type="GO" id="GO:0019706">
    <property type="term" value="F:protein-cysteine S-palmitoyltransferase activity"/>
    <property type="evidence" value="ECO:0000250"/>
    <property type="project" value="FlyBase"/>
</dbReference>
<dbReference type="GO" id="GO:0007268">
    <property type="term" value="P:chemical synaptic transmission"/>
    <property type="evidence" value="ECO:0000315"/>
    <property type="project" value="FlyBase"/>
</dbReference>
<dbReference type="GO" id="GO:0050714">
    <property type="term" value="P:positive regulation of protein secretion"/>
    <property type="evidence" value="ECO:0000315"/>
    <property type="project" value="FlyBase"/>
</dbReference>
<dbReference type="GO" id="GO:0007283">
    <property type="term" value="P:spermatogenesis"/>
    <property type="evidence" value="ECO:0000315"/>
    <property type="project" value="FlyBase"/>
</dbReference>
<dbReference type="GO" id="GO:0016079">
    <property type="term" value="P:synaptic vesicle exocytosis"/>
    <property type="evidence" value="ECO:0000315"/>
    <property type="project" value="FlyBase"/>
</dbReference>
<dbReference type="FunFam" id="1.25.40.20:FF:000294">
    <property type="entry name" value="Palmitoyltransferase"/>
    <property type="match status" value="1"/>
</dbReference>
<dbReference type="Gene3D" id="1.25.40.20">
    <property type="entry name" value="Ankyrin repeat-containing domain"/>
    <property type="match status" value="1"/>
</dbReference>
<dbReference type="InterPro" id="IPR002110">
    <property type="entry name" value="Ankyrin_rpt"/>
</dbReference>
<dbReference type="InterPro" id="IPR036770">
    <property type="entry name" value="Ankyrin_rpt-contain_sf"/>
</dbReference>
<dbReference type="InterPro" id="IPR001594">
    <property type="entry name" value="Palmitoyltrfase_DHHC"/>
</dbReference>
<dbReference type="PANTHER" id="PTHR24161">
    <property type="entry name" value="ANK_REP_REGION DOMAIN-CONTAINING PROTEIN-RELATED"/>
    <property type="match status" value="1"/>
</dbReference>
<dbReference type="PANTHER" id="PTHR24161:SF85">
    <property type="entry name" value="PALMITOYLTRANSFERASE HIP14"/>
    <property type="match status" value="1"/>
</dbReference>
<dbReference type="Pfam" id="PF00023">
    <property type="entry name" value="Ank"/>
    <property type="match status" value="1"/>
</dbReference>
<dbReference type="Pfam" id="PF12796">
    <property type="entry name" value="Ank_2"/>
    <property type="match status" value="1"/>
</dbReference>
<dbReference type="Pfam" id="PF13637">
    <property type="entry name" value="Ank_4"/>
    <property type="match status" value="1"/>
</dbReference>
<dbReference type="Pfam" id="PF01529">
    <property type="entry name" value="DHHC"/>
    <property type="match status" value="1"/>
</dbReference>
<dbReference type="SMART" id="SM00248">
    <property type="entry name" value="ANK"/>
    <property type="match status" value="5"/>
</dbReference>
<dbReference type="SUPFAM" id="SSF48403">
    <property type="entry name" value="Ankyrin repeat"/>
    <property type="match status" value="1"/>
</dbReference>
<dbReference type="PROSITE" id="PS50297">
    <property type="entry name" value="ANK_REP_REGION"/>
    <property type="match status" value="1"/>
</dbReference>
<dbReference type="PROSITE" id="PS50088">
    <property type="entry name" value="ANK_REPEAT"/>
    <property type="match status" value="4"/>
</dbReference>
<dbReference type="PROSITE" id="PS50216">
    <property type="entry name" value="DHHC"/>
    <property type="match status" value="1"/>
</dbReference>
<comment type="function">
    <text evidence="5 6 8">Probable palmitoyltransferase which is required for photoreceptor synaptic transmission and for the correct expression and localization of palmitoylated protein Csp and synaptosomal-associated protein Snap25 (PubMed:18032660, PubMed:18158335). Probably palmitoylates Csp (PubMed:18158335). Probably also palmitoylates the dorsal-ventral patterning protein Sog and promotes its secretion and activity and the stabilization of the membrane-bound form (PubMed:20599894). Required for synaptic vesicle exocytosis (PubMed:18158335).</text>
</comment>
<comment type="catalytic activity">
    <reaction evidence="4">
        <text>L-cysteinyl-[protein] + hexadecanoyl-CoA = S-hexadecanoyl-L-cysteinyl-[protein] + CoA</text>
        <dbReference type="Rhea" id="RHEA:36683"/>
        <dbReference type="Rhea" id="RHEA-COMP:10131"/>
        <dbReference type="Rhea" id="RHEA-COMP:11032"/>
        <dbReference type="ChEBI" id="CHEBI:29950"/>
        <dbReference type="ChEBI" id="CHEBI:57287"/>
        <dbReference type="ChEBI" id="CHEBI:57379"/>
        <dbReference type="ChEBI" id="CHEBI:74151"/>
        <dbReference type="EC" id="2.3.1.225"/>
    </reaction>
</comment>
<comment type="subunit">
    <text evidence="8">Interacts with dorsal-ventral patterning protein Sog.</text>
</comment>
<comment type="subcellular location">
    <subcellularLocation>
        <location evidence="5 7 8">Golgi apparatus membrane</location>
        <topology evidence="2">Multi-pass membrane protein</topology>
    </subcellularLocation>
    <subcellularLocation>
        <location evidence="5 6">Presynaptic cell membrane</location>
        <topology evidence="2">Multi-pass membrane protein</topology>
    </subcellularLocation>
    <text evidence="5">Localizes to the Golgi apparatus in non-neuronal cells and located primarily in presynaptic terminals in neurons.</text>
</comment>
<comment type="tissue specificity">
    <text evidence="6">In stage 13-15 embryos, expressed in the central nervous system. At the third instar larval stage, expressed in the ventral nerve cord and is enriched in the neuropil.</text>
</comment>
<comment type="domain">
    <text evidence="4">The DHHC domain is required for palmitoyltransferase activity.</text>
</comment>
<comment type="disruption phenotype">
    <text evidence="8">RNAi-mediated knockdown causes reduced basal secretion of Sog.</text>
</comment>
<comment type="similarity">
    <text evidence="10">Belongs to the DHHC palmitoyltransferase family. AKR/ZDHHC17 subfamily.</text>
</comment>
<organism evidence="13">
    <name type="scientific">Drosophila melanogaster</name>
    <name type="common">Fruit fly</name>
    <dbReference type="NCBI Taxonomy" id="7227"/>
    <lineage>
        <taxon>Eukaryota</taxon>
        <taxon>Metazoa</taxon>
        <taxon>Ecdysozoa</taxon>
        <taxon>Arthropoda</taxon>
        <taxon>Hexapoda</taxon>
        <taxon>Insecta</taxon>
        <taxon>Pterygota</taxon>
        <taxon>Neoptera</taxon>
        <taxon>Endopterygota</taxon>
        <taxon>Diptera</taxon>
        <taxon>Brachycera</taxon>
        <taxon>Muscomorpha</taxon>
        <taxon>Ephydroidea</taxon>
        <taxon>Drosophilidae</taxon>
        <taxon>Drosophila</taxon>
        <taxon>Sophophora</taxon>
    </lineage>
</organism>